<protein>
    <recommendedName>
        <fullName>Cytolethal distending toxin subunit A</fullName>
        <shortName>CDT A</shortName>
    </recommendedName>
</protein>
<reference key="1">
    <citation type="journal article" date="1997" name="Proc. Natl. Acad. Sci. U.S.A.">
        <title>A diffusible cytotoxin of Haemophilus ducreyi.</title>
        <authorList>
            <person name="Cope L.D."/>
            <person name="Lumbley S."/>
            <person name="Latimer J.L."/>
            <person name="Klesney-Tait J."/>
            <person name="Stevens M.K."/>
            <person name="Johnson L.S."/>
            <person name="Purven M."/>
            <person name="Munson R.S. Jr."/>
            <person name="Lagergard T."/>
            <person name="Radolf J.D."/>
            <person name="Hansen E.J."/>
        </authorList>
    </citation>
    <scope>NUCLEOTIDE SEQUENCE [GENOMIC DNA]</scope>
    <source>
        <strain>35000HP / ATCC 700724</strain>
    </source>
</reference>
<reference key="2">
    <citation type="submission" date="2003-06" db="EMBL/GenBank/DDBJ databases">
        <title>The complete genome sequence of Haemophilus ducreyi.</title>
        <authorList>
            <person name="Munson R.S. Jr."/>
            <person name="Ray W.C."/>
            <person name="Mahairas G."/>
            <person name="Sabo P."/>
            <person name="Mungur R."/>
            <person name="Johnson L."/>
            <person name="Nguyen D."/>
            <person name="Wang J."/>
            <person name="Forst C."/>
            <person name="Hood L."/>
        </authorList>
    </citation>
    <scope>NUCLEOTIDE SEQUENCE [LARGE SCALE GENOMIC DNA]</scope>
    <source>
        <strain>35000HP / ATCC 700724</strain>
    </source>
</reference>
<reference key="3">
    <citation type="journal article" date="2004" name="Nature">
        <title>Assembly and function of a bacterial genotoxin.</title>
        <authorList>
            <person name="Nesic D."/>
            <person name="Hsu Y."/>
            <person name="Stebbins C.E."/>
        </authorList>
    </citation>
    <scope>X-RAY CRYSTALLOGRAPHY (2.0 ANGSTROMS) OF 18-223</scope>
    <scope>FUNCTION</scope>
    <scope>MUTAGENESIS OF TRP-91; TRP-98; TRP-100 AND TYR-102</scope>
    <scope>SUBUNIT</scope>
</reference>
<evidence type="ECO:0000255" key="1">
    <source>
        <dbReference type="PROSITE-ProRule" id="PRU00174"/>
    </source>
</evidence>
<evidence type="ECO:0000255" key="2">
    <source>
        <dbReference type="PROSITE-ProRule" id="PRU00303"/>
    </source>
</evidence>
<evidence type="ECO:0000256" key="3">
    <source>
        <dbReference type="SAM" id="MobiDB-lite"/>
    </source>
</evidence>
<evidence type="ECO:0000269" key="4">
    <source>
    </source>
</evidence>
<evidence type="ECO:0000305" key="5"/>
<evidence type="ECO:0007829" key="6">
    <source>
        <dbReference type="PDB" id="1SR4"/>
    </source>
</evidence>
<keyword id="KW-0002">3D-structure</keyword>
<keyword id="KW-0998">Cell outer membrane</keyword>
<keyword id="KW-0430">Lectin</keyword>
<keyword id="KW-0449">Lipoprotein</keyword>
<keyword id="KW-0472">Membrane</keyword>
<keyword id="KW-0564">Palmitate</keyword>
<keyword id="KW-1185">Reference proteome</keyword>
<keyword id="KW-0732">Signal</keyword>
<keyword id="KW-0800">Toxin</keyword>
<keyword id="KW-0843">Virulence</keyword>
<name>CDTA_HAEDU</name>
<organism>
    <name type="scientific">Haemophilus ducreyi (strain 35000HP / ATCC 700724)</name>
    <dbReference type="NCBI Taxonomy" id="233412"/>
    <lineage>
        <taxon>Bacteria</taxon>
        <taxon>Pseudomonadati</taxon>
        <taxon>Pseudomonadota</taxon>
        <taxon>Gammaproteobacteria</taxon>
        <taxon>Pasteurellales</taxon>
        <taxon>Pasteurellaceae</taxon>
        <taxon>Haemophilus</taxon>
    </lineage>
</organism>
<accession>O06522</accession>
<feature type="signal peptide" evidence="2">
    <location>
        <begin position="1"/>
        <end position="15"/>
    </location>
</feature>
<feature type="chain" id="PRO_0000013371" description="Cytolethal distending toxin subunit A">
    <location>
        <begin position="16"/>
        <end position="223"/>
    </location>
</feature>
<feature type="domain" description="Ricin B-type lectin" evidence="1">
    <location>
        <begin position="123"/>
        <end position="212"/>
    </location>
</feature>
<feature type="region of interest" description="Disordered" evidence="3">
    <location>
        <begin position="20"/>
        <end position="48"/>
    </location>
</feature>
<feature type="region of interest" description="Mediates binding to target cells" evidence="5">
    <location>
        <begin position="91"/>
        <end position="102"/>
    </location>
</feature>
<feature type="lipid moiety-binding region" description="N-palmitoyl cysteine" evidence="2">
    <location>
        <position position="16"/>
    </location>
</feature>
<feature type="lipid moiety-binding region" description="S-diacylglycerol cysteine" evidence="2">
    <location>
        <position position="16"/>
    </location>
</feature>
<feature type="mutagenesis site" description="Abolishes toxicity towards intact cells; when associated with G-98; G-100 and G-102." evidence="4">
    <original>W</original>
    <variation>G</variation>
    <location>
        <position position="91"/>
    </location>
</feature>
<feature type="mutagenesis site" description="Abolishes toxicity towards intact cells; when associated with G-91; G-100 and G-102." evidence="4">
    <original>W</original>
    <variation>G</variation>
    <location>
        <position position="98"/>
    </location>
</feature>
<feature type="mutagenesis site" description="Abolishes toxicity towards intact cells; when associated with G-91; G-98 and G-102." evidence="4">
    <original>W</original>
    <variation>G</variation>
    <location>
        <position position="100"/>
    </location>
</feature>
<feature type="mutagenesis site" description="Abolishes toxicity towards intact cells; when associated with G-91; G-98 and G-100." evidence="4">
    <original>Y</original>
    <variation>G</variation>
    <location>
        <position position="102"/>
    </location>
</feature>
<feature type="strand" evidence="6">
    <location>
        <begin position="59"/>
        <end position="61"/>
    </location>
</feature>
<feature type="helix" evidence="6">
    <location>
        <begin position="73"/>
        <end position="76"/>
    </location>
</feature>
<feature type="strand" evidence="6">
    <location>
        <begin position="78"/>
        <end position="82"/>
    </location>
</feature>
<feature type="strand" evidence="6">
    <location>
        <begin position="85"/>
        <end position="90"/>
    </location>
</feature>
<feature type="strand" evidence="6">
    <location>
        <begin position="98"/>
        <end position="103"/>
    </location>
</feature>
<feature type="helix" evidence="6">
    <location>
        <begin position="104"/>
        <end position="106"/>
    </location>
</feature>
<feature type="helix" evidence="6">
    <location>
        <begin position="108"/>
        <end position="114"/>
    </location>
</feature>
<feature type="strand" evidence="6">
    <location>
        <begin position="116"/>
        <end position="120"/>
    </location>
</feature>
<feature type="strand" evidence="6">
    <location>
        <begin position="127"/>
        <end position="131"/>
    </location>
</feature>
<feature type="turn" evidence="6">
    <location>
        <begin position="132"/>
        <end position="134"/>
    </location>
</feature>
<feature type="strand" evidence="6">
    <location>
        <begin position="137"/>
        <end position="141"/>
    </location>
</feature>
<feature type="strand" evidence="6">
    <location>
        <begin position="144"/>
        <end position="148"/>
    </location>
</feature>
<feature type="helix" evidence="6">
    <location>
        <begin position="155"/>
        <end position="157"/>
    </location>
</feature>
<feature type="strand" evidence="6">
    <location>
        <begin position="159"/>
        <end position="164"/>
    </location>
</feature>
<feature type="strand" evidence="6">
    <location>
        <begin position="169"/>
        <end position="173"/>
    </location>
</feature>
<feature type="turn" evidence="6">
    <location>
        <begin position="174"/>
        <end position="176"/>
    </location>
</feature>
<feature type="strand" evidence="6">
    <location>
        <begin position="179"/>
        <end position="182"/>
    </location>
</feature>
<feature type="strand" evidence="6">
    <location>
        <begin position="187"/>
        <end position="189"/>
    </location>
</feature>
<feature type="strand" evidence="6">
    <location>
        <begin position="193"/>
        <end position="196"/>
    </location>
</feature>
<feature type="strand" evidence="6">
    <location>
        <begin position="210"/>
        <end position="213"/>
    </location>
</feature>
<feature type="strand" evidence="6">
    <location>
        <begin position="219"/>
        <end position="221"/>
    </location>
</feature>
<comment type="function">
    <text evidence="4">CDTs are cytotoxins which induce host cell distension, growth arrest in G2/M phase, nucleus swelling, and chromatin fragmentation in HeLa cells. CdtA, along with CdtC, probably forms a heterodimeric subunit required for the delivery of CdtB.</text>
</comment>
<comment type="subunit">
    <text evidence="4">Heterotrimer of 3 subunits, CdtA, CdtB and CdtC.</text>
</comment>
<comment type="subcellular location">
    <subcellularLocation>
        <location evidence="5">Cell outer membrane</location>
        <topology evidence="5">Lipid-anchor</topology>
    </subcellularLocation>
</comment>
<gene>
    <name type="primary">cdtA</name>
    <name type="ordered locus">HD_0902</name>
</gene>
<proteinExistence type="evidence at protein level"/>
<sequence>MKKFLPSLLLMGSVACSSNQRMNDYSQPESQSDLAPKSSTIQPQPQPLLSKTPSMSLNLLSSSGPNRQVLPSEPSNFMTLMGQNGALLTVWALAKRNWLWAYPNIYSQDFGNIRNWKMEPGKHREYFRFVNQSLGTCVEAYGNGLIHDICSLDKLAQEFELLPTDSGAVVIKSVSQGRCVTYNPVSTTFYSTVTLSVCDGATEPSRDQTWYLAPPVLEATAVN</sequence>
<dbReference type="EMBL" id="U53215">
    <property type="protein sequence ID" value="AAB57725.1"/>
    <property type="molecule type" value="Genomic_DNA"/>
</dbReference>
<dbReference type="EMBL" id="AE017143">
    <property type="protein sequence ID" value="AAP95786.1"/>
    <property type="molecule type" value="Genomic_DNA"/>
</dbReference>
<dbReference type="RefSeq" id="WP_010944836.1">
    <property type="nucleotide sequence ID" value="NC_002940.2"/>
</dbReference>
<dbReference type="PDB" id="1SR4">
    <property type="method" value="X-ray"/>
    <property type="resolution" value="2.00 A"/>
    <property type="chains" value="A=18-223"/>
</dbReference>
<dbReference type="PDBsum" id="1SR4"/>
<dbReference type="SMR" id="O06522"/>
<dbReference type="STRING" id="233412.HD_0902"/>
<dbReference type="KEGG" id="hdu:HD_0902"/>
<dbReference type="eggNOG" id="ENOG50347HZ">
    <property type="taxonomic scope" value="Bacteria"/>
</dbReference>
<dbReference type="HOGENOM" id="CLU_1243172_0_0_6"/>
<dbReference type="OrthoDB" id="5672787at2"/>
<dbReference type="EvolutionaryTrace" id="O06522"/>
<dbReference type="Proteomes" id="UP000001022">
    <property type="component" value="Chromosome"/>
</dbReference>
<dbReference type="GO" id="GO:0009279">
    <property type="term" value="C:cell outer membrane"/>
    <property type="evidence" value="ECO:0007669"/>
    <property type="project" value="UniProtKB-SubCell"/>
</dbReference>
<dbReference type="GO" id="GO:0030246">
    <property type="term" value="F:carbohydrate binding"/>
    <property type="evidence" value="ECO:0007669"/>
    <property type="project" value="UniProtKB-KW"/>
</dbReference>
<dbReference type="GO" id="GO:0090729">
    <property type="term" value="F:toxin activity"/>
    <property type="evidence" value="ECO:0007669"/>
    <property type="project" value="UniProtKB-KW"/>
</dbReference>
<dbReference type="CDD" id="cd23414">
    <property type="entry name" value="beta-trefoil_Ricin_CdtA"/>
    <property type="match status" value="1"/>
</dbReference>
<dbReference type="DisProt" id="DP03020"/>
<dbReference type="Gene3D" id="2.80.10.50">
    <property type="match status" value="1"/>
</dbReference>
<dbReference type="InterPro" id="IPR015957">
    <property type="entry name" value="CDtoxinA"/>
</dbReference>
<dbReference type="InterPro" id="IPR003558">
    <property type="entry name" value="CDtoxinA/C"/>
</dbReference>
<dbReference type="InterPro" id="IPR035992">
    <property type="entry name" value="Ricin_B-like_lectins"/>
</dbReference>
<dbReference type="Pfam" id="PF03498">
    <property type="entry name" value="CDtoxinA"/>
    <property type="match status" value="1"/>
</dbReference>
<dbReference type="PIRSF" id="PIRSF036516">
    <property type="entry name" value="CDT_A"/>
    <property type="match status" value="1"/>
</dbReference>
<dbReference type="PRINTS" id="PR01387">
    <property type="entry name" value="CDTOXINA"/>
</dbReference>
<dbReference type="SUPFAM" id="SSF50370">
    <property type="entry name" value="Ricin B-like lectins"/>
    <property type="match status" value="1"/>
</dbReference>
<dbReference type="PROSITE" id="PS51257">
    <property type="entry name" value="PROKAR_LIPOPROTEIN"/>
    <property type="match status" value="1"/>
</dbReference>
<dbReference type="PROSITE" id="PS50231">
    <property type="entry name" value="RICIN_B_LECTIN"/>
    <property type="match status" value="1"/>
</dbReference>